<gene>
    <name evidence="1" type="primary">fabZ</name>
    <name type="ordered locus">Pro_1417</name>
</gene>
<accession>Q7TV98</accession>
<name>FABZ_PROMA</name>
<evidence type="ECO:0000255" key="1">
    <source>
        <dbReference type="HAMAP-Rule" id="MF_00406"/>
    </source>
</evidence>
<proteinExistence type="inferred from homology"/>
<organism>
    <name type="scientific">Prochlorococcus marinus (strain SARG / CCMP1375 / SS120)</name>
    <dbReference type="NCBI Taxonomy" id="167539"/>
    <lineage>
        <taxon>Bacteria</taxon>
        <taxon>Bacillati</taxon>
        <taxon>Cyanobacteriota</taxon>
        <taxon>Cyanophyceae</taxon>
        <taxon>Synechococcales</taxon>
        <taxon>Prochlorococcaceae</taxon>
        <taxon>Prochlorococcus</taxon>
    </lineage>
</organism>
<reference key="1">
    <citation type="journal article" date="2003" name="Proc. Natl. Acad. Sci. U.S.A.">
        <title>Genome sequence of the cyanobacterium Prochlorococcus marinus SS120, a nearly minimal oxyphototrophic genome.</title>
        <authorList>
            <person name="Dufresne A."/>
            <person name="Salanoubat M."/>
            <person name="Partensky F."/>
            <person name="Artiguenave F."/>
            <person name="Axmann I.M."/>
            <person name="Barbe V."/>
            <person name="Duprat S."/>
            <person name="Galperin M.Y."/>
            <person name="Koonin E.V."/>
            <person name="Le Gall F."/>
            <person name="Makarova K.S."/>
            <person name="Ostrowski M."/>
            <person name="Oztas S."/>
            <person name="Robert C."/>
            <person name="Rogozin I.B."/>
            <person name="Scanlan D.J."/>
            <person name="Tandeau de Marsac N."/>
            <person name="Weissenbach J."/>
            <person name="Wincker P."/>
            <person name="Wolf Y.I."/>
            <person name="Hess W.R."/>
        </authorList>
    </citation>
    <scope>NUCLEOTIDE SEQUENCE [LARGE SCALE GENOMIC DNA]</scope>
    <source>
        <strain>SARG / CCMP1375 / SS120</strain>
    </source>
</reference>
<feature type="chain" id="PRO_0000091710" description="3-hydroxyacyl-[acyl-carrier-protein] dehydratase FabZ">
    <location>
        <begin position="1"/>
        <end position="151"/>
    </location>
</feature>
<feature type="active site" evidence="1">
    <location>
        <position position="57"/>
    </location>
</feature>
<keyword id="KW-0963">Cytoplasm</keyword>
<keyword id="KW-0441">Lipid A biosynthesis</keyword>
<keyword id="KW-0444">Lipid biosynthesis</keyword>
<keyword id="KW-0443">Lipid metabolism</keyword>
<keyword id="KW-0456">Lyase</keyword>
<keyword id="KW-1185">Reference proteome</keyword>
<dbReference type="EC" id="4.2.1.59" evidence="1"/>
<dbReference type="EMBL" id="AE017126">
    <property type="protein sequence ID" value="AAQ00461.1"/>
    <property type="molecule type" value="Genomic_DNA"/>
</dbReference>
<dbReference type="RefSeq" id="NP_875808.1">
    <property type="nucleotide sequence ID" value="NC_005042.1"/>
</dbReference>
<dbReference type="RefSeq" id="WP_011125568.1">
    <property type="nucleotide sequence ID" value="NC_005042.1"/>
</dbReference>
<dbReference type="SMR" id="Q7TV98"/>
<dbReference type="STRING" id="167539.Pro_1417"/>
<dbReference type="EnsemblBacteria" id="AAQ00461">
    <property type="protein sequence ID" value="AAQ00461"/>
    <property type="gene ID" value="Pro_1417"/>
</dbReference>
<dbReference type="KEGG" id="pma:Pro_1417"/>
<dbReference type="PATRIC" id="fig|167539.5.peg.1483"/>
<dbReference type="eggNOG" id="COG0764">
    <property type="taxonomic scope" value="Bacteria"/>
</dbReference>
<dbReference type="HOGENOM" id="CLU_078912_3_0_3"/>
<dbReference type="OrthoDB" id="9772788at2"/>
<dbReference type="Proteomes" id="UP000001420">
    <property type="component" value="Chromosome"/>
</dbReference>
<dbReference type="GO" id="GO:0005737">
    <property type="term" value="C:cytoplasm"/>
    <property type="evidence" value="ECO:0007669"/>
    <property type="project" value="UniProtKB-SubCell"/>
</dbReference>
<dbReference type="GO" id="GO:0016020">
    <property type="term" value="C:membrane"/>
    <property type="evidence" value="ECO:0007669"/>
    <property type="project" value="GOC"/>
</dbReference>
<dbReference type="GO" id="GO:0019171">
    <property type="term" value="F:(3R)-hydroxyacyl-[acyl-carrier-protein] dehydratase activity"/>
    <property type="evidence" value="ECO:0007669"/>
    <property type="project" value="UniProtKB-EC"/>
</dbReference>
<dbReference type="GO" id="GO:0006633">
    <property type="term" value="P:fatty acid biosynthetic process"/>
    <property type="evidence" value="ECO:0007669"/>
    <property type="project" value="UniProtKB-UniRule"/>
</dbReference>
<dbReference type="GO" id="GO:0009245">
    <property type="term" value="P:lipid A biosynthetic process"/>
    <property type="evidence" value="ECO:0007669"/>
    <property type="project" value="UniProtKB-UniRule"/>
</dbReference>
<dbReference type="CDD" id="cd01288">
    <property type="entry name" value="FabZ"/>
    <property type="match status" value="1"/>
</dbReference>
<dbReference type="FunFam" id="3.10.129.10:FF:000001">
    <property type="entry name" value="3-hydroxyacyl-[acyl-carrier-protein] dehydratase FabZ"/>
    <property type="match status" value="1"/>
</dbReference>
<dbReference type="Gene3D" id="3.10.129.10">
    <property type="entry name" value="Hotdog Thioesterase"/>
    <property type="match status" value="1"/>
</dbReference>
<dbReference type="HAMAP" id="MF_00406">
    <property type="entry name" value="FabZ"/>
    <property type="match status" value="1"/>
</dbReference>
<dbReference type="InterPro" id="IPR013114">
    <property type="entry name" value="FabA_FabZ"/>
</dbReference>
<dbReference type="InterPro" id="IPR010084">
    <property type="entry name" value="FabZ"/>
</dbReference>
<dbReference type="InterPro" id="IPR029069">
    <property type="entry name" value="HotDog_dom_sf"/>
</dbReference>
<dbReference type="NCBIfam" id="TIGR01750">
    <property type="entry name" value="fabZ"/>
    <property type="match status" value="1"/>
</dbReference>
<dbReference type="NCBIfam" id="NF000582">
    <property type="entry name" value="PRK00006.1"/>
    <property type="match status" value="1"/>
</dbReference>
<dbReference type="PANTHER" id="PTHR30272">
    <property type="entry name" value="3-HYDROXYACYL-[ACYL-CARRIER-PROTEIN] DEHYDRATASE"/>
    <property type="match status" value="1"/>
</dbReference>
<dbReference type="PANTHER" id="PTHR30272:SF1">
    <property type="entry name" value="3-HYDROXYACYL-[ACYL-CARRIER-PROTEIN] DEHYDRATASE"/>
    <property type="match status" value="1"/>
</dbReference>
<dbReference type="Pfam" id="PF07977">
    <property type="entry name" value="FabA"/>
    <property type="match status" value="1"/>
</dbReference>
<dbReference type="SUPFAM" id="SSF54637">
    <property type="entry name" value="Thioesterase/thiol ester dehydrase-isomerase"/>
    <property type="match status" value="1"/>
</dbReference>
<sequence>MTNSPSSPVVLTNEEIMGLLPHRYPFALVDRVVEYEPGKSATGIKNVTINEPHFQGHFPGRPLMPGVLIVEAMAQVGGLIVKQIPDLPKGLFVFAGIDSVRFRRPVVPGDQLLINCELISIKRQRFGKVKGEAKVDGNLVCSGELMFSLVD</sequence>
<comment type="function">
    <text evidence="1">Involved in unsaturated fatty acids biosynthesis. Catalyzes the dehydration of short chain beta-hydroxyacyl-ACPs and long chain saturated and unsaturated beta-hydroxyacyl-ACPs.</text>
</comment>
<comment type="catalytic activity">
    <reaction evidence="1">
        <text>a (3R)-hydroxyacyl-[ACP] = a (2E)-enoyl-[ACP] + H2O</text>
        <dbReference type="Rhea" id="RHEA:13097"/>
        <dbReference type="Rhea" id="RHEA-COMP:9925"/>
        <dbReference type="Rhea" id="RHEA-COMP:9945"/>
        <dbReference type="ChEBI" id="CHEBI:15377"/>
        <dbReference type="ChEBI" id="CHEBI:78784"/>
        <dbReference type="ChEBI" id="CHEBI:78827"/>
        <dbReference type="EC" id="4.2.1.59"/>
    </reaction>
</comment>
<comment type="subcellular location">
    <subcellularLocation>
        <location evidence="1">Cytoplasm</location>
    </subcellularLocation>
</comment>
<comment type="similarity">
    <text evidence="1">Belongs to the thioester dehydratase family. FabZ subfamily.</text>
</comment>
<protein>
    <recommendedName>
        <fullName evidence="1">3-hydroxyacyl-[acyl-carrier-protein] dehydratase FabZ</fullName>
        <ecNumber evidence="1">4.2.1.59</ecNumber>
    </recommendedName>
    <alternativeName>
        <fullName evidence="1">(3R)-hydroxymyristoyl-[acyl-carrier-protein] dehydratase</fullName>
        <shortName evidence="1">(3R)-hydroxymyristoyl-ACP dehydrase</shortName>
    </alternativeName>
    <alternativeName>
        <fullName evidence="1">Beta-hydroxyacyl-ACP dehydratase</fullName>
    </alternativeName>
</protein>